<protein>
    <recommendedName>
        <fullName>Probable tRNA (guanine(10)-N2)-dimethyltransferase</fullName>
        <ecNumber>2.1.1.213</ecNumber>
    </recommendedName>
    <alternativeName>
        <fullName>tRNA:G10 dimethyltransferase</fullName>
    </alternativeName>
</protein>
<evidence type="ECO:0000250" key="1"/>
<evidence type="ECO:0000305" key="2"/>
<sequence>KLAMCLVNLSRLKKGDVLLDPFCGTGGFLIEGGFMGLKLIGSDIDDDMVNGTLLNLKSYNLTEHIISIKKWNAGDIKSFLKQLNVKYVDGIVTDPPYGISTSAKGNIEEIFNNLGDVLKKDGYLVFASSRKINLDLELMEMYELYIHKSLTRYIHVYKKTDN</sequence>
<comment type="function">
    <text evidence="1">Catalyzes the adenosylmethionine-dependent methylation of the exocyclic amino group (N(2)) of guanosine at position 10 of various tRNAs. Acts via a two-step process that leads to the formation of either N(2)-monomethyl (m(2)G) or N(2)-dimethylguanosine (m(2)(2)G) (By similarity).</text>
</comment>
<comment type="catalytic activity">
    <reaction>
        <text>guanosine(10) in tRNA + 2 S-adenosyl-L-methionine = N(2)-dimethylguanosine(10) in tRNA + 2 S-adenosyl-L-homocysteine + 2 H(+)</text>
        <dbReference type="Rhea" id="RHEA:43124"/>
        <dbReference type="Rhea" id="RHEA-COMP:10355"/>
        <dbReference type="Rhea" id="RHEA-COMP:10358"/>
        <dbReference type="ChEBI" id="CHEBI:15378"/>
        <dbReference type="ChEBI" id="CHEBI:57856"/>
        <dbReference type="ChEBI" id="CHEBI:59789"/>
        <dbReference type="ChEBI" id="CHEBI:74269"/>
        <dbReference type="ChEBI" id="CHEBI:74513"/>
        <dbReference type="EC" id="2.1.1.213"/>
    </reaction>
</comment>
<comment type="subunit">
    <text evidence="1">Monomer.</text>
</comment>
<comment type="subcellular location">
    <subcellularLocation>
        <location evidence="2">Cytoplasm</location>
    </subcellularLocation>
</comment>
<comment type="similarity">
    <text evidence="2">Belongs to the methyltransferase superfamily. Trm-G10 family.</text>
</comment>
<organism>
    <name type="scientific">Methanothermococcus thermolithotrophicus</name>
    <name type="common">Methanococcus thermolithotrophicus</name>
    <dbReference type="NCBI Taxonomy" id="2186"/>
    <lineage>
        <taxon>Archaea</taxon>
        <taxon>Methanobacteriati</taxon>
        <taxon>Methanobacteriota</taxon>
        <taxon>Methanomada group</taxon>
        <taxon>Methanococci</taxon>
        <taxon>Methanococcales</taxon>
        <taxon>Methanococcaceae</taxon>
        <taxon>Methanothermococcus</taxon>
    </lineage>
</organism>
<name>TMG10_METTL</name>
<gene>
    <name type="primary">trmG10</name>
</gene>
<dbReference type="EC" id="2.1.1.213"/>
<dbReference type="EMBL" id="X07500">
    <property type="protein sequence ID" value="CAA30380.1"/>
    <property type="molecule type" value="Genomic_DNA"/>
</dbReference>
<dbReference type="PIR" id="S00737">
    <property type="entry name" value="S00737"/>
</dbReference>
<dbReference type="SMR" id="P05409"/>
<dbReference type="GO" id="GO:0005737">
    <property type="term" value="C:cytoplasm"/>
    <property type="evidence" value="ECO:0007669"/>
    <property type="project" value="UniProtKB-SubCell"/>
</dbReference>
<dbReference type="GO" id="GO:0160101">
    <property type="term" value="F:tRNA (guanine(10)-N2)-dimethyltransferase activity"/>
    <property type="evidence" value="ECO:0007669"/>
    <property type="project" value="UniProtKB-EC"/>
</dbReference>
<dbReference type="GO" id="GO:0000049">
    <property type="term" value="F:tRNA binding"/>
    <property type="evidence" value="ECO:0007669"/>
    <property type="project" value="UniProtKB-KW"/>
</dbReference>
<dbReference type="GO" id="GO:0030488">
    <property type="term" value="P:tRNA methylation"/>
    <property type="evidence" value="ECO:0007669"/>
    <property type="project" value="TreeGrafter"/>
</dbReference>
<dbReference type="CDD" id="cd02440">
    <property type="entry name" value="AdoMet_MTases"/>
    <property type="match status" value="1"/>
</dbReference>
<dbReference type="FunFam" id="3.40.50.150:FF:000251">
    <property type="entry name" value="Putative RNA methylase"/>
    <property type="match status" value="1"/>
</dbReference>
<dbReference type="Gene3D" id="3.40.50.150">
    <property type="entry name" value="Vaccinia Virus protein VP39"/>
    <property type="match status" value="1"/>
</dbReference>
<dbReference type="InterPro" id="IPR002052">
    <property type="entry name" value="DNA_methylase_N6_adenine_CS"/>
</dbReference>
<dbReference type="InterPro" id="IPR000241">
    <property type="entry name" value="RlmKL-like_Mtase"/>
</dbReference>
<dbReference type="InterPro" id="IPR053943">
    <property type="entry name" value="RlmKL-like_Mtase_CS"/>
</dbReference>
<dbReference type="InterPro" id="IPR029063">
    <property type="entry name" value="SAM-dependent_MTases_sf"/>
</dbReference>
<dbReference type="PANTHER" id="PTHR14911">
    <property type="entry name" value="THUMP DOMAIN-CONTAINING"/>
    <property type="match status" value="1"/>
</dbReference>
<dbReference type="PANTHER" id="PTHR14911:SF13">
    <property type="entry name" value="TRNA (GUANINE(6)-N2)-METHYLTRANSFERASE THUMP3"/>
    <property type="match status" value="1"/>
</dbReference>
<dbReference type="Pfam" id="PF01170">
    <property type="entry name" value="UPF0020"/>
    <property type="match status" value="1"/>
</dbReference>
<dbReference type="PRINTS" id="PR00507">
    <property type="entry name" value="N12N6MTFRASE"/>
</dbReference>
<dbReference type="SUPFAM" id="SSF53335">
    <property type="entry name" value="S-adenosyl-L-methionine-dependent methyltransferases"/>
    <property type="match status" value="1"/>
</dbReference>
<dbReference type="PROSITE" id="PS01261">
    <property type="entry name" value="UPF0020"/>
    <property type="match status" value="1"/>
</dbReference>
<accession>P05409</accession>
<proteinExistence type="inferred from homology"/>
<feature type="chain" id="PRO_0000140483" description="Probable tRNA (guanine(10)-N2)-dimethyltransferase">
    <location>
        <begin position="1" status="less than"/>
        <end position="162"/>
    </location>
</feature>
<feature type="non-terminal residue">
    <location>
        <position position="1"/>
    </location>
</feature>
<reference key="1">
    <citation type="journal article" date="1988" name="J. Mol. Evol.">
        <title>Nucleotide sequence of regions homologous to nifH (nitrogenase Fe protein) from the nitrogen-fixing archaebacteria Methanococcus thermolithotrophicus and Methanobacterium ivanovii: evolutionary implications.</title>
        <authorList>
            <person name="Souillard N."/>
            <person name="Magot M."/>
            <person name="Possot O."/>
            <person name="Sibold L."/>
        </authorList>
    </citation>
    <scope>NUCLEOTIDE SEQUENCE [GENOMIC DNA]</scope>
</reference>
<keyword id="KW-0963">Cytoplasm</keyword>
<keyword id="KW-0489">Methyltransferase</keyword>
<keyword id="KW-0694">RNA-binding</keyword>
<keyword id="KW-0949">S-adenosyl-L-methionine</keyword>
<keyword id="KW-0808">Transferase</keyword>
<keyword id="KW-0819">tRNA processing</keyword>
<keyword id="KW-0820">tRNA-binding</keyword>